<proteinExistence type="inferred from homology"/>
<keyword id="KW-0028">Amino-acid biosynthesis</keyword>
<keyword id="KW-0963">Cytoplasm</keyword>
<keyword id="KW-0315">Glutamine amidotransferase</keyword>
<keyword id="KW-0368">Histidine biosynthesis</keyword>
<keyword id="KW-0378">Hydrolase</keyword>
<keyword id="KW-0456">Lyase</keyword>
<keyword id="KW-1185">Reference proteome</keyword>
<dbReference type="EC" id="4.3.2.10" evidence="1"/>
<dbReference type="EC" id="3.5.1.2" evidence="1"/>
<dbReference type="EMBL" id="AE017354">
    <property type="protein sequence ID" value="AAU27281.1"/>
    <property type="molecule type" value="Genomic_DNA"/>
</dbReference>
<dbReference type="RefSeq" id="YP_095228.1">
    <property type="nucleotide sequence ID" value="NC_002942.5"/>
</dbReference>
<dbReference type="SMR" id="Q5ZW90"/>
<dbReference type="STRING" id="272624.lpg1196"/>
<dbReference type="MEROPS" id="C26.965"/>
<dbReference type="PaxDb" id="272624-lpg1196"/>
<dbReference type="KEGG" id="lpn:lpg1196"/>
<dbReference type="PATRIC" id="fig|272624.6.peg.1258"/>
<dbReference type="eggNOG" id="COG0118">
    <property type="taxonomic scope" value="Bacteria"/>
</dbReference>
<dbReference type="HOGENOM" id="CLU_071837_0_0_6"/>
<dbReference type="OrthoDB" id="9807137at2"/>
<dbReference type="UniPathway" id="UPA00031">
    <property type="reaction ID" value="UER00010"/>
</dbReference>
<dbReference type="Proteomes" id="UP000000609">
    <property type="component" value="Chromosome"/>
</dbReference>
<dbReference type="GO" id="GO:0005737">
    <property type="term" value="C:cytoplasm"/>
    <property type="evidence" value="ECO:0007669"/>
    <property type="project" value="UniProtKB-SubCell"/>
</dbReference>
<dbReference type="GO" id="GO:0004359">
    <property type="term" value="F:glutaminase activity"/>
    <property type="evidence" value="ECO:0007669"/>
    <property type="project" value="UniProtKB-EC"/>
</dbReference>
<dbReference type="GO" id="GO:0000107">
    <property type="term" value="F:imidazoleglycerol-phosphate synthase activity"/>
    <property type="evidence" value="ECO:0007669"/>
    <property type="project" value="UniProtKB-UniRule"/>
</dbReference>
<dbReference type="GO" id="GO:0016829">
    <property type="term" value="F:lyase activity"/>
    <property type="evidence" value="ECO:0007669"/>
    <property type="project" value="UniProtKB-KW"/>
</dbReference>
<dbReference type="GO" id="GO:0000105">
    <property type="term" value="P:L-histidine biosynthetic process"/>
    <property type="evidence" value="ECO:0007669"/>
    <property type="project" value="UniProtKB-UniRule"/>
</dbReference>
<dbReference type="CDD" id="cd01748">
    <property type="entry name" value="GATase1_IGP_Synthase"/>
    <property type="match status" value="1"/>
</dbReference>
<dbReference type="FunFam" id="3.40.50.880:FF:000009">
    <property type="entry name" value="Imidazole glycerol phosphate synthase subunit HisH"/>
    <property type="match status" value="1"/>
</dbReference>
<dbReference type="Gene3D" id="3.40.50.880">
    <property type="match status" value="1"/>
</dbReference>
<dbReference type="HAMAP" id="MF_00278">
    <property type="entry name" value="HisH"/>
    <property type="match status" value="1"/>
</dbReference>
<dbReference type="InterPro" id="IPR029062">
    <property type="entry name" value="Class_I_gatase-like"/>
</dbReference>
<dbReference type="InterPro" id="IPR017926">
    <property type="entry name" value="GATASE"/>
</dbReference>
<dbReference type="InterPro" id="IPR010139">
    <property type="entry name" value="Imidazole-glycPsynth_HisH"/>
</dbReference>
<dbReference type="NCBIfam" id="TIGR01855">
    <property type="entry name" value="IMP_synth_hisH"/>
    <property type="match status" value="1"/>
</dbReference>
<dbReference type="PANTHER" id="PTHR42701">
    <property type="entry name" value="IMIDAZOLE GLYCEROL PHOSPHATE SYNTHASE SUBUNIT HISH"/>
    <property type="match status" value="1"/>
</dbReference>
<dbReference type="PANTHER" id="PTHR42701:SF1">
    <property type="entry name" value="IMIDAZOLE GLYCEROL PHOSPHATE SYNTHASE SUBUNIT HISH"/>
    <property type="match status" value="1"/>
</dbReference>
<dbReference type="Pfam" id="PF00117">
    <property type="entry name" value="GATase"/>
    <property type="match status" value="1"/>
</dbReference>
<dbReference type="PIRSF" id="PIRSF000495">
    <property type="entry name" value="Amidotransf_hisH"/>
    <property type="match status" value="1"/>
</dbReference>
<dbReference type="PRINTS" id="PR00097">
    <property type="entry name" value="ANTSNTHASEII"/>
</dbReference>
<dbReference type="SUPFAM" id="SSF52317">
    <property type="entry name" value="Class I glutamine amidotransferase-like"/>
    <property type="match status" value="1"/>
</dbReference>
<dbReference type="PROSITE" id="PS51273">
    <property type="entry name" value="GATASE_TYPE_1"/>
    <property type="match status" value="1"/>
</dbReference>
<name>HIS52_LEGPH</name>
<sequence length="199" mass="21936">MIAVIDVSGNNLTSLTNALIRLGGHFALTHDAEEIQKASHVILPGVGTARSGMTALQQNGLIDVLRTLTQPLLGICLGMQLLLEYSEEDDIPCLGLIPGVAELLKAERNHPVPHMGWNNLHWQKTSSLQQGLNNSDYVYFVHSYALKADNYALARCQYHEEFTAVVKKGNFYGMQFHPEKSANVGMVLLNNFLSLESTC</sequence>
<gene>
    <name evidence="1" type="primary">hisH2</name>
    <name type="ordered locus">lpg1196</name>
</gene>
<reference key="1">
    <citation type="journal article" date="2004" name="Science">
        <title>The genomic sequence of the accidental pathogen Legionella pneumophila.</title>
        <authorList>
            <person name="Chien M."/>
            <person name="Morozova I."/>
            <person name="Shi S."/>
            <person name="Sheng H."/>
            <person name="Chen J."/>
            <person name="Gomez S.M."/>
            <person name="Asamani G."/>
            <person name="Hill K."/>
            <person name="Nuara J."/>
            <person name="Feder M."/>
            <person name="Rineer J."/>
            <person name="Greenberg J.J."/>
            <person name="Steshenko V."/>
            <person name="Park S.H."/>
            <person name="Zhao B."/>
            <person name="Teplitskaya E."/>
            <person name="Edwards J.R."/>
            <person name="Pampou S."/>
            <person name="Georghiou A."/>
            <person name="Chou I.-C."/>
            <person name="Iannuccilli W."/>
            <person name="Ulz M.E."/>
            <person name="Kim D.H."/>
            <person name="Geringer-Sameth A."/>
            <person name="Goldsberry C."/>
            <person name="Morozov P."/>
            <person name="Fischer S.G."/>
            <person name="Segal G."/>
            <person name="Qu X."/>
            <person name="Rzhetsky A."/>
            <person name="Zhang P."/>
            <person name="Cayanis E."/>
            <person name="De Jong P.J."/>
            <person name="Ju J."/>
            <person name="Kalachikov S."/>
            <person name="Shuman H.A."/>
            <person name="Russo J.J."/>
        </authorList>
    </citation>
    <scope>NUCLEOTIDE SEQUENCE [LARGE SCALE GENOMIC DNA]</scope>
    <source>
        <strain>Philadelphia 1 / ATCC 33152 / DSM 7513</strain>
    </source>
</reference>
<accession>Q5ZW90</accession>
<organism>
    <name type="scientific">Legionella pneumophila subsp. pneumophila (strain Philadelphia 1 / ATCC 33152 / DSM 7513)</name>
    <dbReference type="NCBI Taxonomy" id="272624"/>
    <lineage>
        <taxon>Bacteria</taxon>
        <taxon>Pseudomonadati</taxon>
        <taxon>Pseudomonadota</taxon>
        <taxon>Gammaproteobacteria</taxon>
        <taxon>Legionellales</taxon>
        <taxon>Legionellaceae</taxon>
        <taxon>Legionella</taxon>
    </lineage>
</organism>
<protein>
    <recommendedName>
        <fullName evidence="1">Imidazole glycerol phosphate synthase subunit HisH 2</fullName>
        <ecNumber evidence="1">4.3.2.10</ecNumber>
    </recommendedName>
    <alternativeName>
        <fullName evidence="1">IGP synthase glutaminase subunit 2</fullName>
        <ecNumber evidence="1">3.5.1.2</ecNumber>
    </alternativeName>
    <alternativeName>
        <fullName evidence="1">IGP synthase subunit HisH 2</fullName>
    </alternativeName>
    <alternativeName>
        <fullName evidence="1">ImGP synthase subunit HisH 2</fullName>
        <shortName evidence="1">IGPS subunit HisH 2</shortName>
    </alternativeName>
</protein>
<comment type="function">
    <text evidence="1">IGPS catalyzes the conversion of PRFAR and glutamine to IGP, AICAR and glutamate. The HisH subunit provides the glutamine amidotransferase activity that produces the ammonia necessary to HisF for the synthesis of IGP and AICAR.</text>
</comment>
<comment type="catalytic activity">
    <reaction evidence="1">
        <text>5-[(5-phospho-1-deoxy-D-ribulos-1-ylimino)methylamino]-1-(5-phospho-beta-D-ribosyl)imidazole-4-carboxamide + L-glutamine = D-erythro-1-(imidazol-4-yl)glycerol 3-phosphate + 5-amino-1-(5-phospho-beta-D-ribosyl)imidazole-4-carboxamide + L-glutamate + H(+)</text>
        <dbReference type="Rhea" id="RHEA:24793"/>
        <dbReference type="ChEBI" id="CHEBI:15378"/>
        <dbReference type="ChEBI" id="CHEBI:29985"/>
        <dbReference type="ChEBI" id="CHEBI:58278"/>
        <dbReference type="ChEBI" id="CHEBI:58359"/>
        <dbReference type="ChEBI" id="CHEBI:58475"/>
        <dbReference type="ChEBI" id="CHEBI:58525"/>
        <dbReference type="EC" id="4.3.2.10"/>
    </reaction>
</comment>
<comment type="catalytic activity">
    <reaction evidence="1">
        <text>L-glutamine + H2O = L-glutamate + NH4(+)</text>
        <dbReference type="Rhea" id="RHEA:15889"/>
        <dbReference type="ChEBI" id="CHEBI:15377"/>
        <dbReference type="ChEBI" id="CHEBI:28938"/>
        <dbReference type="ChEBI" id="CHEBI:29985"/>
        <dbReference type="ChEBI" id="CHEBI:58359"/>
        <dbReference type="EC" id="3.5.1.2"/>
    </reaction>
</comment>
<comment type="pathway">
    <text evidence="1">Amino-acid biosynthesis; L-histidine biosynthesis; L-histidine from 5-phospho-alpha-D-ribose 1-diphosphate: step 5/9.</text>
</comment>
<comment type="subunit">
    <text evidence="1">Heterodimer of HisH and HisF.</text>
</comment>
<comment type="subcellular location">
    <subcellularLocation>
        <location evidence="1">Cytoplasm</location>
    </subcellularLocation>
</comment>
<evidence type="ECO:0000255" key="1">
    <source>
        <dbReference type="HAMAP-Rule" id="MF_00278"/>
    </source>
</evidence>
<feature type="chain" id="PRO_0000231733" description="Imidazole glycerol phosphate synthase subunit HisH 2">
    <location>
        <begin position="1"/>
        <end position="199"/>
    </location>
</feature>
<feature type="domain" description="Glutamine amidotransferase type-1" evidence="1">
    <location>
        <begin position="1"/>
        <end position="199"/>
    </location>
</feature>
<feature type="active site" description="Nucleophile" evidence="1">
    <location>
        <position position="76"/>
    </location>
</feature>
<feature type="active site" evidence="1">
    <location>
        <position position="177"/>
    </location>
</feature>
<feature type="active site" evidence="1">
    <location>
        <position position="179"/>
    </location>
</feature>